<evidence type="ECO:0000250" key="1"/>
<evidence type="ECO:0000305" key="2"/>
<dbReference type="EC" id="4.1.1.18"/>
<dbReference type="EMBL" id="U37109">
    <property type="protein sequence ID" value="AAB41260.1"/>
    <property type="molecule type" value="Genomic_DNA"/>
</dbReference>
<dbReference type="EMBL" id="AE006468">
    <property type="protein sequence ID" value="AAL21453.1"/>
    <property type="molecule type" value="Genomic_DNA"/>
</dbReference>
<dbReference type="RefSeq" id="NP_461494.1">
    <property type="nucleotide sequence ID" value="NC_003197.2"/>
</dbReference>
<dbReference type="RefSeq" id="WP_001100652.1">
    <property type="nucleotide sequence ID" value="NC_003197.2"/>
</dbReference>
<dbReference type="SMR" id="P0A1Z0"/>
<dbReference type="STRING" id="99287.STM2559"/>
<dbReference type="PaxDb" id="99287-STM2559"/>
<dbReference type="GeneID" id="1254081"/>
<dbReference type="KEGG" id="stm:STM2559"/>
<dbReference type="PATRIC" id="fig|99287.12.peg.2700"/>
<dbReference type="HOGENOM" id="CLU_014292_3_0_6"/>
<dbReference type="OMA" id="HKSVFHA"/>
<dbReference type="PhylomeDB" id="P0A1Z0"/>
<dbReference type="BioCyc" id="SENT99287:STM2559-MONOMER"/>
<dbReference type="Proteomes" id="UP000001014">
    <property type="component" value="Chromosome"/>
</dbReference>
<dbReference type="GO" id="GO:0005737">
    <property type="term" value="C:cytoplasm"/>
    <property type="evidence" value="ECO:0007669"/>
    <property type="project" value="UniProtKB-SubCell"/>
</dbReference>
<dbReference type="GO" id="GO:0008923">
    <property type="term" value="F:lysine decarboxylase activity"/>
    <property type="evidence" value="ECO:0007669"/>
    <property type="project" value="UniProtKB-EC"/>
</dbReference>
<dbReference type="GO" id="GO:0006520">
    <property type="term" value="P:amino acid metabolic process"/>
    <property type="evidence" value="ECO:0007669"/>
    <property type="project" value="InterPro"/>
</dbReference>
<dbReference type="CDD" id="cd00615">
    <property type="entry name" value="Orn_deC_like"/>
    <property type="match status" value="1"/>
</dbReference>
<dbReference type="FunFam" id="3.40.50.2300:FF:000084">
    <property type="entry name" value="Lysine decarboxylase, inducible"/>
    <property type="match status" value="1"/>
</dbReference>
<dbReference type="FunFam" id="3.40.640.10:FF:000008">
    <property type="entry name" value="Lysine decarboxylase, inducible"/>
    <property type="match status" value="1"/>
</dbReference>
<dbReference type="FunFam" id="3.90.100.10:FF:000001">
    <property type="entry name" value="Lysine decarboxylase, inducible"/>
    <property type="match status" value="1"/>
</dbReference>
<dbReference type="FunFam" id="3.90.1150.10:FF:000016">
    <property type="entry name" value="Lysine decarboxylase, inducible"/>
    <property type="match status" value="1"/>
</dbReference>
<dbReference type="Gene3D" id="3.40.50.2300">
    <property type="match status" value="1"/>
</dbReference>
<dbReference type="Gene3D" id="3.90.1150.10">
    <property type="entry name" value="Aspartate Aminotransferase, domain 1"/>
    <property type="match status" value="1"/>
</dbReference>
<dbReference type="Gene3D" id="3.90.100.10">
    <property type="entry name" value="Orn/Lys/Arg decarboxylase, C-terminal domain"/>
    <property type="match status" value="1"/>
</dbReference>
<dbReference type="Gene3D" id="3.40.640.10">
    <property type="entry name" value="Type I PLP-dependent aspartate aminotransferase-like (Major domain)"/>
    <property type="match status" value="1"/>
</dbReference>
<dbReference type="InterPro" id="IPR005308">
    <property type="entry name" value="OKR_de-COase_N"/>
</dbReference>
<dbReference type="InterPro" id="IPR011193">
    <property type="entry name" value="Orn/lys/arg_de-COase"/>
</dbReference>
<dbReference type="InterPro" id="IPR000310">
    <property type="entry name" value="Orn/Lys/Arg_deCO2ase_major_dom"/>
</dbReference>
<dbReference type="InterPro" id="IPR008286">
    <property type="entry name" value="Prn/Lys/Arg_de-COase_C"/>
</dbReference>
<dbReference type="InterPro" id="IPR036633">
    <property type="entry name" value="Prn/Lys/Arg_de-COase_C_sf"/>
</dbReference>
<dbReference type="InterPro" id="IPR015424">
    <property type="entry name" value="PyrdxlP-dep_Trfase"/>
</dbReference>
<dbReference type="InterPro" id="IPR015421">
    <property type="entry name" value="PyrdxlP-dep_Trfase_major"/>
</dbReference>
<dbReference type="InterPro" id="IPR015422">
    <property type="entry name" value="PyrdxlP-dep_Trfase_small"/>
</dbReference>
<dbReference type="NCBIfam" id="NF011928">
    <property type="entry name" value="PRK15399.1"/>
    <property type="match status" value="1"/>
</dbReference>
<dbReference type="NCBIfam" id="NF011929">
    <property type="entry name" value="PRK15400.1"/>
    <property type="match status" value="1"/>
</dbReference>
<dbReference type="PANTHER" id="PTHR45229:SF3">
    <property type="entry name" value="BIODEGRADATIVE ARGININE DECARBOXYLASE"/>
    <property type="match status" value="1"/>
</dbReference>
<dbReference type="PANTHER" id="PTHR45229">
    <property type="entry name" value="CONSTITUTIVE ORNITHINE DECARBOXYLASE"/>
    <property type="match status" value="1"/>
</dbReference>
<dbReference type="Pfam" id="PF01276">
    <property type="entry name" value="OKR_DC_1"/>
    <property type="match status" value="1"/>
</dbReference>
<dbReference type="Pfam" id="PF03711">
    <property type="entry name" value="OKR_DC_1_C"/>
    <property type="match status" value="1"/>
</dbReference>
<dbReference type="Pfam" id="PF03709">
    <property type="entry name" value="OKR_DC_1_N"/>
    <property type="match status" value="1"/>
</dbReference>
<dbReference type="PIRSF" id="PIRSF009393">
    <property type="entry name" value="Orn_decarb"/>
    <property type="match status" value="1"/>
</dbReference>
<dbReference type="SUPFAM" id="SSF55904">
    <property type="entry name" value="Ornithine decarboxylase C-terminal domain"/>
    <property type="match status" value="1"/>
</dbReference>
<dbReference type="SUPFAM" id="SSF53383">
    <property type="entry name" value="PLP-dependent transferases"/>
    <property type="match status" value="1"/>
</dbReference>
<dbReference type="PROSITE" id="PS00703">
    <property type="entry name" value="OKR_DC_1"/>
    <property type="match status" value="1"/>
</dbReference>
<accession>P0A1Z0</accession>
<accession>Q60002</accession>
<keyword id="KW-0963">Cytoplasm</keyword>
<keyword id="KW-0210">Decarboxylase</keyword>
<keyword id="KW-0456">Lyase</keyword>
<keyword id="KW-0663">Pyridoxal phosphate</keyword>
<keyword id="KW-1185">Reference proteome</keyword>
<protein>
    <recommendedName>
        <fullName>Inducible lysine decarboxylase</fullName>
        <shortName>LDC</shortName>
        <ecNumber>4.1.1.18</ecNumber>
    </recommendedName>
</protein>
<gene>
    <name type="primary">cadA</name>
    <name type="synonym">ldcI</name>
    <name type="ordered locus">STM2559</name>
</gene>
<proteinExistence type="inferred from homology"/>
<organism>
    <name type="scientific">Salmonella typhimurium (strain LT2 / SGSC1412 / ATCC 700720)</name>
    <dbReference type="NCBI Taxonomy" id="99287"/>
    <lineage>
        <taxon>Bacteria</taxon>
        <taxon>Pseudomonadati</taxon>
        <taxon>Pseudomonadota</taxon>
        <taxon>Gammaproteobacteria</taxon>
        <taxon>Enterobacterales</taxon>
        <taxon>Enterobacteriaceae</taxon>
        <taxon>Salmonella</taxon>
    </lineage>
</organism>
<comment type="catalytic activity">
    <reaction>
        <text>L-lysine + H(+) = cadaverine + CO2</text>
        <dbReference type="Rhea" id="RHEA:22352"/>
        <dbReference type="ChEBI" id="CHEBI:15378"/>
        <dbReference type="ChEBI" id="CHEBI:16526"/>
        <dbReference type="ChEBI" id="CHEBI:32551"/>
        <dbReference type="ChEBI" id="CHEBI:58384"/>
        <dbReference type="EC" id="4.1.1.18"/>
    </reaction>
</comment>
<comment type="cofactor">
    <cofactor>
        <name>pyridoxal 5'-phosphate</name>
        <dbReference type="ChEBI" id="CHEBI:597326"/>
    </cofactor>
</comment>
<comment type="subunit">
    <text evidence="1">Homodecamer. Interacts with RavA.</text>
</comment>
<comment type="subcellular location">
    <subcellularLocation>
        <location evidence="2">Cytoplasm</location>
    </subcellularLocation>
</comment>
<comment type="similarity">
    <text evidence="2">Belongs to the Orn/Lys/Arg decarboxylase class-I family.</text>
</comment>
<feature type="chain" id="PRO_0000201141" description="Inducible lysine decarboxylase">
    <location>
        <begin position="1"/>
        <end position="714"/>
    </location>
</feature>
<feature type="modified residue" description="N6-(pyridoxal phosphate)lysine" evidence="1">
    <location>
        <position position="367"/>
    </location>
</feature>
<feature type="sequence conflict" description="In Ref. 1; AAB41260." evidence="2" ref="1">
    <original>L</original>
    <variation>V</variation>
    <location>
        <position position="43"/>
    </location>
</feature>
<feature type="sequence conflict" description="In Ref. 1; AAB41260." evidence="2" ref="1">
    <original>EYM</original>
    <variation>GIL</variation>
    <location>
        <begin position="75"/>
        <end position="77"/>
    </location>
</feature>
<feature type="sequence conflict" description="In Ref. 1; AAB41260." evidence="2" ref="1">
    <original>A</original>
    <variation>R</variation>
    <location>
        <position position="115"/>
    </location>
</feature>
<feature type="sequence conflict" description="In Ref. 1; AAB41260." evidence="2" ref="1">
    <original>RE</original>
    <variation>PQ</variation>
    <location>
        <begin position="141"/>
        <end position="142"/>
    </location>
</feature>
<feature type="sequence conflict" description="In Ref. 1; AAB41260." evidence="2" ref="1">
    <original>N</original>
    <variation>K</variation>
    <location>
        <position position="305"/>
    </location>
</feature>
<feature type="sequence conflict" description="In Ref. 1; AAB41260." evidence="2" ref="1">
    <original>NT</original>
    <variation>GA</variation>
    <location>
        <begin position="314"/>
        <end position="315"/>
    </location>
</feature>
<feature type="sequence conflict" description="In Ref. 1; AAB41260." evidence="2" ref="1">
    <original>LL</original>
    <variation>MM</variation>
    <location>
        <begin position="368"/>
        <end position="369"/>
    </location>
</feature>
<feature type="sequence conflict" description="In Ref. 1; AAB41260." evidence="2" ref="1">
    <original>G</original>
    <variation>C</variation>
    <location>
        <position position="421"/>
    </location>
</feature>
<feature type="sequence conflict" description="In Ref. 1; AAB41260." evidence="2" ref="1">
    <original>I</original>
    <variation>V</variation>
    <location>
        <position position="524"/>
    </location>
</feature>
<feature type="sequence conflict" description="In Ref. 1; AAB41260." evidence="2" ref="1">
    <original>L</original>
    <variation>PA</variation>
    <location>
        <position position="550"/>
    </location>
</feature>
<feature type="sequence conflict" description="In Ref. 1; AAB41260." evidence="2" ref="1">
    <original>R</original>
    <variation>P</variation>
    <location>
        <position position="585"/>
    </location>
</feature>
<feature type="sequence conflict" description="In Ref. 1; AAB41260." evidence="2" ref="1">
    <original>L</original>
    <variation>C</variation>
    <location>
        <position position="613"/>
    </location>
</feature>
<name>LDCI_SALTY</name>
<sequence>MNVIAIMNHMGVYFKEEPIRELHRALEGLNFRIVYPNDREDLLKLIENNSRLCGVIFDWDKYNLELCEEISKLNEYMPLYAFANSYSTLDVSLNDLRMQVRFFEYALGAAADIAAKIRQNTDEYIDNILPPLTKALFKYVREGKYTFCTPGHMGGTAFQKSPVGSIFYDFFGPNTMKSDISISVSELGSLLDHSGPHKEAEEYIARVFNAERSYMVTNGTSTANKIVGMYSAPAGSTVLIDRNCHKSLTHLMMMSDITPIYFRPTRNAYGILGGIPQSEFQHATIAKRVKETPNATWPVHAVITNSTYDGLLYNTDYIKKTLDVKSIHFDSAWVPYTNFSPIYQGKCGMSGDRVEGKIIYETQSTHKLLAAFSQASMIHVKGDINEETFNEAYMMHTTTSPHYGIVASTETAAAMMKGNAGKRLINGSIERAIKFRKEIKRLKSESDGWFFDVWQPEHIDGAECWPLRSDSAWHGFKNIDNEHMYLDPIKVTILTPGMKKDGTMDEFGIPASLVAKYLDERGIIVEKTGPYNLLFLFSIGIDKTKALSLLRALTEFKRAFDLNLRVKNILPALYREAPEFYENMRIQELAQNIHKLVEHHNLPDLMYRAFEVLPKMVMTPYTAFQKELHGETEEVYLEEMVGRVNANMILPYPPGVPLVMPGEMITEESRPVLEFLQMLCEIGAHYPGFETDIHGAYRQADGRYTVKVLKENTK</sequence>
<reference key="1">
    <citation type="journal article" date="1996" name="Mol. Microbiol.">
        <title>Internal pH crisis, lysine decarboxylase and the acid tolerance response of Salmonella typhimurium.</title>
        <authorList>
            <person name="Park Y.K."/>
            <person name="Bearson B."/>
            <person name="Bang S.H."/>
            <person name="Bang I.S."/>
            <person name="Foster J.W."/>
        </authorList>
    </citation>
    <scope>NUCLEOTIDE SEQUENCE [GENOMIC DNA]</scope>
</reference>
<reference key="2">
    <citation type="journal article" date="2001" name="Nature">
        <title>Complete genome sequence of Salmonella enterica serovar Typhimurium LT2.</title>
        <authorList>
            <person name="McClelland M."/>
            <person name="Sanderson K.E."/>
            <person name="Spieth J."/>
            <person name="Clifton S.W."/>
            <person name="Latreille P."/>
            <person name="Courtney L."/>
            <person name="Porwollik S."/>
            <person name="Ali J."/>
            <person name="Dante M."/>
            <person name="Du F."/>
            <person name="Hou S."/>
            <person name="Layman D."/>
            <person name="Leonard S."/>
            <person name="Nguyen C."/>
            <person name="Scott K."/>
            <person name="Holmes A."/>
            <person name="Grewal N."/>
            <person name="Mulvaney E."/>
            <person name="Ryan E."/>
            <person name="Sun H."/>
            <person name="Florea L."/>
            <person name="Miller W."/>
            <person name="Stoneking T."/>
            <person name="Nhan M."/>
            <person name="Waterston R."/>
            <person name="Wilson R.K."/>
        </authorList>
    </citation>
    <scope>NUCLEOTIDE SEQUENCE [LARGE SCALE GENOMIC DNA]</scope>
    <source>
        <strain>LT2 / SGSC1412 / ATCC 700720</strain>
    </source>
</reference>